<feature type="chain" id="PRO_0000104964" description="DNA-binding protein HU">
    <location>
        <begin position="1"/>
        <end position="99"/>
    </location>
</feature>
<feature type="region of interest" description="Disordered" evidence="2">
    <location>
        <begin position="63"/>
        <end position="82"/>
    </location>
</feature>
<evidence type="ECO:0000250" key="1"/>
<evidence type="ECO:0000256" key="2">
    <source>
        <dbReference type="SAM" id="MobiDB-lite"/>
    </source>
</evidence>
<evidence type="ECO:0000305" key="3"/>
<accession>Q9ZDZ2</accession>
<dbReference type="EMBL" id="AJ235270">
    <property type="protein sequence ID" value="CAA14638.1"/>
    <property type="status" value="ALT_INIT"/>
    <property type="molecule type" value="Genomic_DNA"/>
</dbReference>
<dbReference type="PIR" id="G71727">
    <property type="entry name" value="G71727"/>
</dbReference>
<dbReference type="RefSeq" id="NP_220561.1">
    <property type="nucleotide sequence ID" value="NC_000963.1"/>
</dbReference>
<dbReference type="SMR" id="Q9ZDZ2"/>
<dbReference type="STRING" id="272947.gene:17555254"/>
<dbReference type="EnsemblBacteria" id="CAA14638">
    <property type="protein sequence ID" value="CAA14638"/>
    <property type="gene ID" value="CAA14638"/>
</dbReference>
<dbReference type="KEGG" id="rpr:RP171"/>
<dbReference type="PATRIC" id="fig|272947.5.peg.176"/>
<dbReference type="eggNOG" id="COG0776">
    <property type="taxonomic scope" value="Bacteria"/>
</dbReference>
<dbReference type="HOGENOM" id="CLU_105066_3_2_5"/>
<dbReference type="OrthoDB" id="9799835at2"/>
<dbReference type="Proteomes" id="UP000002480">
    <property type="component" value="Chromosome"/>
</dbReference>
<dbReference type="GO" id="GO:0003677">
    <property type="term" value="F:DNA binding"/>
    <property type="evidence" value="ECO:0007669"/>
    <property type="project" value="UniProtKB-KW"/>
</dbReference>
<dbReference type="GO" id="GO:0030527">
    <property type="term" value="F:structural constituent of chromatin"/>
    <property type="evidence" value="ECO:0007669"/>
    <property type="project" value="InterPro"/>
</dbReference>
<dbReference type="GO" id="GO:0030261">
    <property type="term" value="P:chromosome condensation"/>
    <property type="evidence" value="ECO:0007669"/>
    <property type="project" value="UniProtKB-KW"/>
</dbReference>
<dbReference type="CDD" id="cd13831">
    <property type="entry name" value="HU"/>
    <property type="match status" value="1"/>
</dbReference>
<dbReference type="Gene3D" id="4.10.520.10">
    <property type="entry name" value="IHF-like DNA-binding proteins"/>
    <property type="match status" value="1"/>
</dbReference>
<dbReference type="InterPro" id="IPR000119">
    <property type="entry name" value="Hist_DNA-bd"/>
</dbReference>
<dbReference type="InterPro" id="IPR020816">
    <property type="entry name" value="Histone-like_DNA-bd_CS"/>
</dbReference>
<dbReference type="InterPro" id="IPR010992">
    <property type="entry name" value="IHF-like_DNA-bd_dom_sf"/>
</dbReference>
<dbReference type="PANTHER" id="PTHR33175">
    <property type="entry name" value="DNA-BINDING PROTEIN HU"/>
    <property type="match status" value="1"/>
</dbReference>
<dbReference type="PANTHER" id="PTHR33175:SF3">
    <property type="entry name" value="DNA-BINDING PROTEIN HU-BETA"/>
    <property type="match status" value="1"/>
</dbReference>
<dbReference type="Pfam" id="PF00216">
    <property type="entry name" value="Bac_DNA_binding"/>
    <property type="match status" value="1"/>
</dbReference>
<dbReference type="PRINTS" id="PR01727">
    <property type="entry name" value="DNABINDINGHU"/>
</dbReference>
<dbReference type="SMART" id="SM00411">
    <property type="entry name" value="BHL"/>
    <property type="match status" value="1"/>
</dbReference>
<dbReference type="SUPFAM" id="SSF47729">
    <property type="entry name" value="IHF-like DNA-binding proteins"/>
    <property type="match status" value="1"/>
</dbReference>
<dbReference type="PROSITE" id="PS00045">
    <property type="entry name" value="HISTONE_LIKE"/>
    <property type="match status" value="1"/>
</dbReference>
<gene>
    <name type="primary">hup</name>
    <name type="synonym">hupA</name>
    <name type="ordered locus">RP171</name>
</gene>
<organism>
    <name type="scientific">Rickettsia prowazekii (strain Madrid E)</name>
    <dbReference type="NCBI Taxonomy" id="272947"/>
    <lineage>
        <taxon>Bacteria</taxon>
        <taxon>Pseudomonadati</taxon>
        <taxon>Pseudomonadota</taxon>
        <taxon>Alphaproteobacteria</taxon>
        <taxon>Rickettsiales</taxon>
        <taxon>Rickettsiaceae</taxon>
        <taxon>Rickettsieae</taxon>
        <taxon>Rickettsia</taxon>
        <taxon>typhus group</taxon>
    </lineage>
</organism>
<protein>
    <recommendedName>
        <fullName>DNA-binding protein HU</fullName>
    </recommendedName>
</protein>
<name>DBH_RICPR</name>
<reference key="1">
    <citation type="journal article" date="1998" name="Nature">
        <title>The genome sequence of Rickettsia prowazekii and the origin of mitochondria.</title>
        <authorList>
            <person name="Andersson S.G.E."/>
            <person name="Zomorodipour A."/>
            <person name="Andersson J.O."/>
            <person name="Sicheritz-Ponten T."/>
            <person name="Alsmark U.C.M."/>
            <person name="Podowski R.M."/>
            <person name="Naeslund A.K."/>
            <person name="Eriksson A.-S."/>
            <person name="Winkler H.H."/>
            <person name="Kurland C.G."/>
        </authorList>
    </citation>
    <scope>NUCLEOTIDE SEQUENCE [LARGE SCALE GENOMIC DNA]</scope>
    <source>
        <strain>Madrid E</strain>
    </source>
</reference>
<comment type="function">
    <text evidence="1">Histone-like DNA-binding protein which is capable of wrapping DNA to stabilize it, and thus to prevent its denaturation under extreme environmental conditions.</text>
</comment>
<comment type="subunit">
    <text evidence="1">Homodimer.</text>
</comment>
<comment type="similarity">
    <text evidence="3">Belongs to the bacterial histone-like protein family.</text>
</comment>
<comment type="sequence caution" evidence="3">
    <conflict type="erroneous initiation">
        <sequence resource="EMBL-CDS" id="CAA14638"/>
    </conflict>
</comment>
<keyword id="KW-0226">DNA condensation</keyword>
<keyword id="KW-0238">DNA-binding</keyword>
<keyword id="KW-1185">Reference proteome</keyword>
<proteinExistence type="inferred from homology"/>
<sequence>MNKTEFIAFMTEHGHNNKHAAHKTLTKADAEKALNLVIESVISAIKSKHNVNLTGFGSFEIHHRKEREGRNPKTGAKMKIDAYNQPTFRAGRKLKEACN</sequence>